<evidence type="ECO:0000255" key="1">
    <source>
        <dbReference type="HAMAP-Rule" id="MF_01114"/>
    </source>
</evidence>
<reference key="1">
    <citation type="journal article" date="2006" name="Proc. Natl. Acad. Sci. U.S.A.">
        <title>Comparative genomics of the lactic acid bacteria.</title>
        <authorList>
            <person name="Makarova K.S."/>
            <person name="Slesarev A."/>
            <person name="Wolf Y.I."/>
            <person name="Sorokin A."/>
            <person name="Mirkin B."/>
            <person name="Koonin E.V."/>
            <person name="Pavlov A."/>
            <person name="Pavlova N."/>
            <person name="Karamychev V."/>
            <person name="Polouchine N."/>
            <person name="Shakhova V."/>
            <person name="Grigoriev I."/>
            <person name="Lou Y."/>
            <person name="Rohksar D."/>
            <person name="Lucas S."/>
            <person name="Huang K."/>
            <person name="Goodstein D.M."/>
            <person name="Hawkins T."/>
            <person name="Plengvidhya V."/>
            <person name="Welker D."/>
            <person name="Hughes J."/>
            <person name="Goh Y."/>
            <person name="Benson A."/>
            <person name="Baldwin K."/>
            <person name="Lee J.-H."/>
            <person name="Diaz-Muniz I."/>
            <person name="Dosti B."/>
            <person name="Smeianov V."/>
            <person name="Wechter W."/>
            <person name="Barabote R."/>
            <person name="Lorca G."/>
            <person name="Altermann E."/>
            <person name="Barrangou R."/>
            <person name="Ganesan B."/>
            <person name="Xie Y."/>
            <person name="Rawsthorne H."/>
            <person name="Tamir D."/>
            <person name="Parker C."/>
            <person name="Breidt F."/>
            <person name="Broadbent J.R."/>
            <person name="Hutkins R."/>
            <person name="O'Sullivan D."/>
            <person name="Steele J."/>
            <person name="Unlu G."/>
            <person name="Saier M.H. Jr."/>
            <person name="Klaenhammer T."/>
            <person name="Richardson P."/>
            <person name="Kozyavkin S."/>
            <person name="Weimer B.C."/>
            <person name="Mills D.A."/>
        </authorList>
    </citation>
    <scope>NUCLEOTIDE SEQUENCE [LARGE SCALE GENOMIC DNA]</scope>
    <source>
        <strain>ATCC BAA-365 / Lb-18</strain>
    </source>
</reference>
<protein>
    <recommendedName>
        <fullName evidence="1">Regulatory protein RecX</fullName>
    </recommendedName>
</protein>
<keyword id="KW-0963">Cytoplasm</keyword>
<dbReference type="EMBL" id="CP000412">
    <property type="protein sequence ID" value="ABJ58142.1"/>
    <property type="molecule type" value="Genomic_DNA"/>
</dbReference>
<dbReference type="RefSeq" id="WP_011678068.1">
    <property type="nucleotide sequence ID" value="NC_008529.1"/>
</dbReference>
<dbReference type="SMR" id="Q04BN0"/>
<dbReference type="KEGG" id="lbu:LBUL_0502"/>
<dbReference type="HOGENOM" id="CLU_066607_4_0_9"/>
<dbReference type="BioCyc" id="LDEL321956:LBUL_RS02380-MONOMER"/>
<dbReference type="GO" id="GO:0005737">
    <property type="term" value="C:cytoplasm"/>
    <property type="evidence" value="ECO:0007669"/>
    <property type="project" value="UniProtKB-SubCell"/>
</dbReference>
<dbReference type="GO" id="GO:0006282">
    <property type="term" value="P:regulation of DNA repair"/>
    <property type="evidence" value="ECO:0007669"/>
    <property type="project" value="UniProtKB-UniRule"/>
</dbReference>
<dbReference type="Gene3D" id="1.10.10.10">
    <property type="entry name" value="Winged helix-like DNA-binding domain superfamily/Winged helix DNA-binding domain"/>
    <property type="match status" value="4"/>
</dbReference>
<dbReference type="HAMAP" id="MF_01114">
    <property type="entry name" value="RecX"/>
    <property type="match status" value="1"/>
</dbReference>
<dbReference type="InterPro" id="IPR053926">
    <property type="entry name" value="RecX_HTH_1st"/>
</dbReference>
<dbReference type="InterPro" id="IPR053924">
    <property type="entry name" value="RecX_HTH_2nd"/>
</dbReference>
<dbReference type="InterPro" id="IPR053925">
    <property type="entry name" value="RecX_HTH_3rd"/>
</dbReference>
<dbReference type="InterPro" id="IPR003783">
    <property type="entry name" value="Regulatory_RecX"/>
</dbReference>
<dbReference type="InterPro" id="IPR036388">
    <property type="entry name" value="WH-like_DNA-bd_sf"/>
</dbReference>
<dbReference type="NCBIfam" id="NF010733">
    <property type="entry name" value="PRK14135.1"/>
    <property type="match status" value="1"/>
</dbReference>
<dbReference type="PANTHER" id="PTHR33602">
    <property type="entry name" value="REGULATORY PROTEIN RECX FAMILY PROTEIN"/>
    <property type="match status" value="1"/>
</dbReference>
<dbReference type="PANTHER" id="PTHR33602:SF1">
    <property type="entry name" value="REGULATORY PROTEIN RECX FAMILY PROTEIN"/>
    <property type="match status" value="1"/>
</dbReference>
<dbReference type="Pfam" id="PF21982">
    <property type="entry name" value="RecX_HTH1"/>
    <property type="match status" value="1"/>
</dbReference>
<dbReference type="Pfam" id="PF02631">
    <property type="entry name" value="RecX_HTH2"/>
    <property type="match status" value="1"/>
</dbReference>
<dbReference type="Pfam" id="PF21981">
    <property type="entry name" value="RecX_HTH3"/>
    <property type="match status" value="1"/>
</dbReference>
<gene>
    <name evidence="1" type="primary">recX</name>
    <name type="ordered locus">LBUL_0502</name>
</gene>
<feature type="chain" id="PRO_1000065180" description="Regulatory protein RecX">
    <location>
        <begin position="1"/>
        <end position="271"/>
    </location>
</feature>
<comment type="function">
    <text evidence="1">Modulates RecA activity.</text>
</comment>
<comment type="subcellular location">
    <subcellularLocation>
        <location evidence="1">Cytoplasm</location>
    </subcellularLocation>
</comment>
<comment type="similarity">
    <text evidence="1">Belongs to the RecX family.</text>
</comment>
<accession>Q04BN0</accession>
<name>RECX_LACDB</name>
<proteinExistence type="inferred from homology"/>
<sequence>MAIITKVSAQKRQGRYNIFLDQEYAFSVSEKTLAEFVLLKGQELSPQKINEILDYEASAKASDLAARYLSYQPRTIKEVTDYLSQHEISRSAAKRAVNELTHLGYLDDAAYARLFVKNNLQVGKNGPGAVRRDLKKKGIDDDLIEAALADVTDEEWAGVGKRLVKSLLGQQGKIAKREVDRKMQTKLLSHGFSGSLAQAVTQDLVPEADEDQERAALVKQGLKAYKRFKRYEPGVREQKMRQYLYSHGFSGDEISAFLVGEIIPLEELEEY</sequence>
<organism>
    <name type="scientific">Lactobacillus delbrueckii subsp. bulgaricus (strain ATCC BAA-365 / Lb-18)</name>
    <dbReference type="NCBI Taxonomy" id="321956"/>
    <lineage>
        <taxon>Bacteria</taxon>
        <taxon>Bacillati</taxon>
        <taxon>Bacillota</taxon>
        <taxon>Bacilli</taxon>
        <taxon>Lactobacillales</taxon>
        <taxon>Lactobacillaceae</taxon>
        <taxon>Lactobacillus</taxon>
    </lineage>
</organism>